<reference key="1">
    <citation type="journal article" date="2004" name="Nat. Biotechnol.">
        <title>Complete sequence and comparative genome analysis of the dairy bacterium Streptococcus thermophilus.</title>
        <authorList>
            <person name="Bolotin A."/>
            <person name="Quinquis B."/>
            <person name="Renault P."/>
            <person name="Sorokin A."/>
            <person name="Ehrlich S.D."/>
            <person name="Kulakauskas S."/>
            <person name="Lapidus A."/>
            <person name="Goltsman E."/>
            <person name="Mazur M."/>
            <person name="Pusch G.D."/>
            <person name="Fonstein M."/>
            <person name="Overbeek R."/>
            <person name="Kyprides N."/>
            <person name="Purnelle B."/>
            <person name="Prozzi D."/>
            <person name="Ngui K."/>
            <person name="Masuy D."/>
            <person name="Hancy F."/>
            <person name="Burteau S."/>
            <person name="Boutry M."/>
            <person name="Delcour J."/>
            <person name="Goffeau A."/>
            <person name="Hols P."/>
        </authorList>
    </citation>
    <scope>NUCLEOTIDE SEQUENCE [LARGE SCALE GENOMIC DNA]</scope>
    <source>
        <strain>CNRZ 1066</strain>
    </source>
</reference>
<organism>
    <name type="scientific">Streptococcus thermophilus (strain CNRZ 1066)</name>
    <dbReference type="NCBI Taxonomy" id="299768"/>
    <lineage>
        <taxon>Bacteria</taxon>
        <taxon>Bacillati</taxon>
        <taxon>Bacillota</taxon>
        <taxon>Bacilli</taxon>
        <taxon>Lactobacillales</taxon>
        <taxon>Streptococcaceae</taxon>
        <taxon>Streptococcus</taxon>
    </lineage>
</organism>
<feature type="chain" id="PRO_0000095885" description="Translation initiation factor IF-1">
    <location>
        <begin position="1"/>
        <end position="72"/>
    </location>
</feature>
<feature type="domain" description="S1-like" evidence="1">
    <location>
        <begin position="1"/>
        <end position="72"/>
    </location>
</feature>
<evidence type="ECO:0000255" key="1">
    <source>
        <dbReference type="HAMAP-Rule" id="MF_00075"/>
    </source>
</evidence>
<protein>
    <recommendedName>
        <fullName evidence="1">Translation initiation factor IF-1</fullName>
    </recommendedName>
</protein>
<gene>
    <name evidence="1" type="primary">infA</name>
    <name type="ordered locus">str1912</name>
</gene>
<comment type="function">
    <text evidence="1">One of the essential components for the initiation of protein synthesis. Stabilizes the binding of IF-2 and IF-3 on the 30S subunit to which N-formylmethionyl-tRNA(fMet) subsequently binds. Helps modulate mRNA selection, yielding the 30S pre-initiation complex (PIC). Upon addition of the 50S ribosomal subunit IF-1, IF-2 and IF-3 are released leaving the mature 70S translation initiation complex.</text>
</comment>
<comment type="subunit">
    <text evidence="1">Component of the 30S ribosomal translation pre-initiation complex which assembles on the 30S ribosome in the order IF-2 and IF-3, IF-1 and N-formylmethionyl-tRNA(fMet); mRNA recruitment can occur at any time during PIC assembly.</text>
</comment>
<comment type="subcellular location">
    <subcellularLocation>
        <location evidence="1">Cytoplasm</location>
    </subcellularLocation>
</comment>
<comment type="similarity">
    <text evidence="1">Belongs to the IF-1 family.</text>
</comment>
<accession>Q5LXT3</accession>
<sequence length="72" mass="8273">MAKEDVIEIEGKVVETMPNAMFTVELENGHQILATVSGKIRKNYIRILVGDRVTVEMSPYDLTRGRITYRFK</sequence>
<keyword id="KW-0963">Cytoplasm</keyword>
<keyword id="KW-0396">Initiation factor</keyword>
<keyword id="KW-0648">Protein biosynthesis</keyword>
<keyword id="KW-0694">RNA-binding</keyword>
<keyword id="KW-0699">rRNA-binding</keyword>
<dbReference type="EMBL" id="CP000024">
    <property type="protein sequence ID" value="AAV63425.1"/>
    <property type="molecule type" value="Genomic_DNA"/>
</dbReference>
<dbReference type="RefSeq" id="WP_001040189.1">
    <property type="nucleotide sequence ID" value="NC_006449.1"/>
</dbReference>
<dbReference type="SMR" id="Q5LXT3"/>
<dbReference type="GeneID" id="98392414"/>
<dbReference type="KEGG" id="stc:str1912"/>
<dbReference type="HOGENOM" id="CLU_151267_1_0_9"/>
<dbReference type="GO" id="GO:0005829">
    <property type="term" value="C:cytosol"/>
    <property type="evidence" value="ECO:0007669"/>
    <property type="project" value="TreeGrafter"/>
</dbReference>
<dbReference type="GO" id="GO:0043022">
    <property type="term" value="F:ribosome binding"/>
    <property type="evidence" value="ECO:0007669"/>
    <property type="project" value="UniProtKB-UniRule"/>
</dbReference>
<dbReference type="GO" id="GO:0019843">
    <property type="term" value="F:rRNA binding"/>
    <property type="evidence" value="ECO:0007669"/>
    <property type="project" value="UniProtKB-UniRule"/>
</dbReference>
<dbReference type="GO" id="GO:0003743">
    <property type="term" value="F:translation initiation factor activity"/>
    <property type="evidence" value="ECO:0007669"/>
    <property type="project" value="UniProtKB-UniRule"/>
</dbReference>
<dbReference type="CDD" id="cd04451">
    <property type="entry name" value="S1_IF1"/>
    <property type="match status" value="1"/>
</dbReference>
<dbReference type="FunFam" id="2.40.50.140:FF:000002">
    <property type="entry name" value="Translation initiation factor IF-1"/>
    <property type="match status" value="1"/>
</dbReference>
<dbReference type="Gene3D" id="2.40.50.140">
    <property type="entry name" value="Nucleic acid-binding proteins"/>
    <property type="match status" value="1"/>
</dbReference>
<dbReference type="HAMAP" id="MF_00075">
    <property type="entry name" value="IF_1"/>
    <property type="match status" value="1"/>
</dbReference>
<dbReference type="InterPro" id="IPR012340">
    <property type="entry name" value="NA-bd_OB-fold"/>
</dbReference>
<dbReference type="InterPro" id="IPR006196">
    <property type="entry name" value="RNA-binding_domain_S1_IF1"/>
</dbReference>
<dbReference type="InterPro" id="IPR003029">
    <property type="entry name" value="S1_domain"/>
</dbReference>
<dbReference type="InterPro" id="IPR004368">
    <property type="entry name" value="TIF_IF1"/>
</dbReference>
<dbReference type="NCBIfam" id="TIGR00008">
    <property type="entry name" value="infA"/>
    <property type="match status" value="1"/>
</dbReference>
<dbReference type="PANTHER" id="PTHR33370">
    <property type="entry name" value="TRANSLATION INITIATION FACTOR IF-1, CHLOROPLASTIC"/>
    <property type="match status" value="1"/>
</dbReference>
<dbReference type="PANTHER" id="PTHR33370:SF1">
    <property type="entry name" value="TRANSLATION INITIATION FACTOR IF-1, CHLOROPLASTIC"/>
    <property type="match status" value="1"/>
</dbReference>
<dbReference type="Pfam" id="PF01176">
    <property type="entry name" value="eIF-1a"/>
    <property type="match status" value="1"/>
</dbReference>
<dbReference type="SMART" id="SM00316">
    <property type="entry name" value="S1"/>
    <property type="match status" value="1"/>
</dbReference>
<dbReference type="SUPFAM" id="SSF50249">
    <property type="entry name" value="Nucleic acid-binding proteins"/>
    <property type="match status" value="1"/>
</dbReference>
<dbReference type="PROSITE" id="PS50832">
    <property type="entry name" value="S1_IF1_TYPE"/>
    <property type="match status" value="1"/>
</dbReference>
<proteinExistence type="inferred from homology"/>
<name>IF1_STRT1</name>